<organism>
    <name type="scientific">Homo sapiens</name>
    <name type="common">Human</name>
    <dbReference type="NCBI Taxonomy" id="9606"/>
    <lineage>
        <taxon>Eukaryota</taxon>
        <taxon>Metazoa</taxon>
        <taxon>Chordata</taxon>
        <taxon>Craniata</taxon>
        <taxon>Vertebrata</taxon>
        <taxon>Euteleostomi</taxon>
        <taxon>Mammalia</taxon>
        <taxon>Eutheria</taxon>
        <taxon>Euarchontoglires</taxon>
        <taxon>Primates</taxon>
        <taxon>Haplorrhini</taxon>
        <taxon>Catarrhini</taxon>
        <taxon>Hominidae</taxon>
        <taxon>Homo</taxon>
    </lineage>
</organism>
<protein>
    <recommendedName>
        <fullName evidence="7">Large ribosomal subunit protein uL2m</fullName>
    </recommendedName>
    <alternativeName>
        <fullName>39S ribosomal protein L2, mitochondrial</fullName>
        <shortName>L2mt</shortName>
        <shortName>MRP-L2</shortName>
    </alternativeName>
</protein>
<comment type="subunit">
    <text evidence="3 4 5 6">Component of the mitochondrial large ribosomal subunit (mt-LSU) (PubMed:25278503, PubMed:25838379, PubMed:28892042, PubMed:35177605). Mature mammalian 55S mitochondrial ribosomes consist of a small (28S) and a large (39S) subunit. The 28S small subunit contains a 12S ribosomal RNA (12S mt-rRNA) and 30 different proteins. The 39S large subunit contains a 16S rRNA (16S mt-rRNA), a copy of mitochondrial valine transfer RNA (mt-tRNA(Val)), which plays an integral structural role, and 52 different proteins.</text>
</comment>
<comment type="subcellular location">
    <subcellularLocation>
        <location evidence="3 4 5">Mitochondrion</location>
    </subcellularLocation>
</comment>
<comment type="similarity">
    <text evidence="8">Belongs to the universal ribosomal protein uL2 family.</text>
</comment>
<comment type="sequence caution" evidence="8">
    <conflict type="frameshift">
        <sequence resource="EMBL-CDS" id="AAD27731"/>
    </conflict>
</comment>
<sequence length="305" mass="33301">MALCALTRALRSLNLAPPTVAAPAPSLFPAAQMMNNGLLQQPSALMLLPCRPVLTSVALNANFVSWKSRTKYTITPVKMRKSGGRDHTGRIRVHGIGGGHKQRYRMIDFLRFRPEETKSGPFEEKVIQVRYDPCRSADIALVAGGSRKRWIIATENMQAGDTILNSNHIGRMAVAAREGDAHPLGALPVGTLINNVESEPGRGAQYIRAAGTCGVLLRKVNGTAIIQLPSKRQMQVLETCVATVGRVSNVDHNKRVIGKAGRNRWLGKRPNSGRWHRKGGWAGRKIRPLPPMKSYVKLPSASAQS</sequence>
<gene>
    <name type="primary">MRPL2</name>
    <name type="ORF">CGI-22</name>
</gene>
<evidence type="ECO:0000255" key="1"/>
<evidence type="ECO:0000256" key="2">
    <source>
        <dbReference type="SAM" id="MobiDB-lite"/>
    </source>
</evidence>
<evidence type="ECO:0000269" key="3">
    <source>
    </source>
</evidence>
<evidence type="ECO:0000269" key="4">
    <source>
    </source>
</evidence>
<evidence type="ECO:0000269" key="5">
    <source>
    </source>
</evidence>
<evidence type="ECO:0000269" key="6">
    <source>
    </source>
</evidence>
<evidence type="ECO:0000303" key="7">
    <source>
    </source>
</evidence>
<evidence type="ECO:0000305" key="8"/>
<evidence type="ECO:0007744" key="9">
    <source>
        <dbReference type="PDB" id="3J7Y"/>
    </source>
</evidence>
<evidence type="ECO:0007744" key="10">
    <source>
        <dbReference type="PDB" id="3J9M"/>
    </source>
</evidence>
<evidence type="ECO:0007744" key="11">
    <source>
        <dbReference type="PDB" id="5OOL"/>
    </source>
</evidence>
<evidence type="ECO:0007744" key="12">
    <source>
        <dbReference type="PDB" id="5OOM"/>
    </source>
</evidence>
<evidence type="ECO:0007744" key="13">
    <source>
        <dbReference type="PDB" id="7QH6"/>
    </source>
</evidence>
<evidence type="ECO:0007744" key="14">
    <source>
        <dbReference type="PDB" id="7QH7"/>
    </source>
</evidence>
<evidence type="ECO:0007829" key="15">
    <source>
        <dbReference type="PDB" id="5OOL"/>
    </source>
</evidence>
<evidence type="ECO:0007829" key="16">
    <source>
        <dbReference type="PDB" id="7OF0"/>
    </source>
</evidence>
<evidence type="ECO:0007829" key="17">
    <source>
        <dbReference type="PDB" id="7OIE"/>
    </source>
</evidence>
<evidence type="ECO:0007829" key="18">
    <source>
        <dbReference type="PDB" id="7QH7"/>
    </source>
</evidence>
<evidence type="ECO:0007829" key="19">
    <source>
        <dbReference type="PDB" id="8QU5"/>
    </source>
</evidence>
<accession>Q5T653</accession>
<accession>B2RC56</accession>
<accession>Q8WUL1</accession>
<accession>Q96Q56</accession>
<accession>Q9Y311</accession>
<keyword id="KW-0002">3D-structure</keyword>
<keyword id="KW-0496">Mitochondrion</keyword>
<keyword id="KW-1267">Proteomics identification</keyword>
<keyword id="KW-1185">Reference proteome</keyword>
<keyword id="KW-0687">Ribonucleoprotein</keyword>
<keyword id="KW-0689">Ribosomal protein</keyword>
<keyword id="KW-0809">Transit peptide</keyword>
<name>RM02_HUMAN</name>
<proteinExistence type="evidence at protein level"/>
<dbReference type="EMBL" id="AF132956">
    <property type="protein sequence ID" value="AAD27731.1"/>
    <property type="status" value="ALT_FRAME"/>
    <property type="molecule type" value="mRNA"/>
</dbReference>
<dbReference type="EMBL" id="AK314948">
    <property type="protein sequence ID" value="BAG37453.1"/>
    <property type="molecule type" value="mRNA"/>
</dbReference>
<dbReference type="EMBL" id="AL355385">
    <property type="status" value="NOT_ANNOTATED_CDS"/>
    <property type="molecule type" value="Genomic_DNA"/>
</dbReference>
<dbReference type="EMBL" id="BC013685">
    <property type="protein sequence ID" value="AAH13685.1"/>
    <property type="molecule type" value="mRNA"/>
</dbReference>
<dbReference type="EMBL" id="BC020212">
    <property type="protein sequence ID" value="AAH20212.1"/>
    <property type="molecule type" value="mRNA"/>
</dbReference>
<dbReference type="EMBL" id="AB051617">
    <property type="protein sequence ID" value="BAB54945.1"/>
    <property type="molecule type" value="Genomic_DNA"/>
</dbReference>
<dbReference type="CCDS" id="CCDS34454.1"/>
<dbReference type="RefSeq" id="NP_001287777.1">
    <property type="nucleotide sequence ID" value="NM_001300848.1"/>
</dbReference>
<dbReference type="RefSeq" id="NP_057034.2">
    <property type="nucleotide sequence ID" value="NM_015950.4"/>
</dbReference>
<dbReference type="PDB" id="3J7Y">
    <property type="method" value="EM"/>
    <property type="resolution" value="3.40 A"/>
    <property type="chains" value="D=1-305"/>
</dbReference>
<dbReference type="PDB" id="3J9M">
    <property type="method" value="EM"/>
    <property type="resolution" value="3.50 A"/>
    <property type="chains" value="D=1-305"/>
</dbReference>
<dbReference type="PDB" id="5OOL">
    <property type="method" value="EM"/>
    <property type="resolution" value="3.06 A"/>
    <property type="chains" value="D=1-305"/>
</dbReference>
<dbReference type="PDB" id="5OOM">
    <property type="method" value="EM"/>
    <property type="resolution" value="3.03 A"/>
    <property type="chains" value="D=1-305"/>
</dbReference>
<dbReference type="PDB" id="6I9R">
    <property type="method" value="EM"/>
    <property type="resolution" value="3.90 A"/>
    <property type="chains" value="D=1-305"/>
</dbReference>
<dbReference type="PDB" id="6NU2">
    <property type="method" value="EM"/>
    <property type="resolution" value="3.90 A"/>
    <property type="chains" value="D=61-296"/>
</dbReference>
<dbReference type="PDB" id="6NU3">
    <property type="method" value="EM"/>
    <property type="resolution" value="4.40 A"/>
    <property type="chains" value="D=1-305"/>
</dbReference>
<dbReference type="PDB" id="6VLZ">
    <property type="method" value="EM"/>
    <property type="resolution" value="2.97 A"/>
    <property type="chains" value="D=1-305"/>
</dbReference>
<dbReference type="PDB" id="6VMI">
    <property type="method" value="EM"/>
    <property type="resolution" value="2.96 A"/>
    <property type="chains" value="D=1-305"/>
</dbReference>
<dbReference type="PDB" id="6ZM5">
    <property type="method" value="EM"/>
    <property type="resolution" value="2.89 A"/>
    <property type="chains" value="D=1-305"/>
</dbReference>
<dbReference type="PDB" id="6ZM6">
    <property type="method" value="EM"/>
    <property type="resolution" value="2.59 A"/>
    <property type="chains" value="D=1-305"/>
</dbReference>
<dbReference type="PDB" id="6ZS9">
    <property type="method" value="EM"/>
    <property type="resolution" value="4.00 A"/>
    <property type="chains" value="XD=1-305"/>
</dbReference>
<dbReference type="PDB" id="6ZSA">
    <property type="method" value="EM"/>
    <property type="resolution" value="4.00 A"/>
    <property type="chains" value="XD=1-305"/>
</dbReference>
<dbReference type="PDB" id="6ZSB">
    <property type="method" value="EM"/>
    <property type="resolution" value="4.50 A"/>
    <property type="chains" value="XD=1-305"/>
</dbReference>
<dbReference type="PDB" id="6ZSC">
    <property type="method" value="EM"/>
    <property type="resolution" value="3.50 A"/>
    <property type="chains" value="XD=1-305"/>
</dbReference>
<dbReference type="PDB" id="6ZSD">
    <property type="method" value="EM"/>
    <property type="resolution" value="3.70 A"/>
    <property type="chains" value="XD=1-305"/>
</dbReference>
<dbReference type="PDB" id="6ZSE">
    <property type="method" value="EM"/>
    <property type="resolution" value="5.00 A"/>
    <property type="chains" value="XD=1-305"/>
</dbReference>
<dbReference type="PDB" id="6ZSG">
    <property type="method" value="EM"/>
    <property type="resolution" value="4.00 A"/>
    <property type="chains" value="XD=1-305"/>
</dbReference>
<dbReference type="PDB" id="7A5F">
    <property type="method" value="EM"/>
    <property type="resolution" value="4.40 A"/>
    <property type="chains" value="D3=1-305"/>
</dbReference>
<dbReference type="PDB" id="7A5G">
    <property type="method" value="EM"/>
    <property type="resolution" value="4.33 A"/>
    <property type="chains" value="D3=1-305"/>
</dbReference>
<dbReference type="PDB" id="7A5H">
    <property type="method" value="EM"/>
    <property type="resolution" value="3.30 A"/>
    <property type="chains" value="D=1-305"/>
</dbReference>
<dbReference type="PDB" id="7A5I">
    <property type="method" value="EM"/>
    <property type="resolution" value="3.70 A"/>
    <property type="chains" value="D3=1-305"/>
</dbReference>
<dbReference type="PDB" id="7A5J">
    <property type="method" value="EM"/>
    <property type="resolution" value="3.10 A"/>
    <property type="chains" value="D=1-305"/>
</dbReference>
<dbReference type="PDB" id="7A5K">
    <property type="method" value="EM"/>
    <property type="resolution" value="3.70 A"/>
    <property type="chains" value="D3=1-305"/>
</dbReference>
<dbReference type="PDB" id="7L08">
    <property type="method" value="EM"/>
    <property type="resolution" value="3.49 A"/>
    <property type="chains" value="D=1-305"/>
</dbReference>
<dbReference type="PDB" id="7L20">
    <property type="method" value="EM"/>
    <property type="resolution" value="3.15 A"/>
    <property type="chains" value="D=1-305"/>
</dbReference>
<dbReference type="PDB" id="7O9K">
    <property type="method" value="EM"/>
    <property type="resolution" value="3.10 A"/>
    <property type="chains" value="D=1-305"/>
</dbReference>
<dbReference type="PDB" id="7O9M">
    <property type="method" value="EM"/>
    <property type="resolution" value="2.50 A"/>
    <property type="chains" value="D=1-305"/>
</dbReference>
<dbReference type="PDB" id="7ODR">
    <property type="method" value="EM"/>
    <property type="resolution" value="2.90 A"/>
    <property type="chains" value="D=1-305"/>
</dbReference>
<dbReference type="PDB" id="7ODS">
    <property type="method" value="EM"/>
    <property type="resolution" value="3.10 A"/>
    <property type="chains" value="D=1-305"/>
</dbReference>
<dbReference type="PDB" id="7ODT">
    <property type="method" value="EM"/>
    <property type="resolution" value="3.10 A"/>
    <property type="chains" value="D=1-305"/>
</dbReference>
<dbReference type="PDB" id="7OF0">
    <property type="method" value="EM"/>
    <property type="resolution" value="2.20 A"/>
    <property type="chains" value="D=1-305"/>
</dbReference>
<dbReference type="PDB" id="7OF2">
    <property type="method" value="EM"/>
    <property type="resolution" value="2.70 A"/>
    <property type="chains" value="D=1-305"/>
</dbReference>
<dbReference type="PDB" id="7OF3">
    <property type="method" value="EM"/>
    <property type="resolution" value="2.70 A"/>
    <property type="chains" value="D=1-305"/>
</dbReference>
<dbReference type="PDB" id="7OF4">
    <property type="method" value="EM"/>
    <property type="resolution" value="2.70 A"/>
    <property type="chains" value="D=1-305"/>
</dbReference>
<dbReference type="PDB" id="7OF5">
    <property type="method" value="EM"/>
    <property type="resolution" value="2.90 A"/>
    <property type="chains" value="D=1-305"/>
</dbReference>
<dbReference type="PDB" id="7OF6">
    <property type="method" value="EM"/>
    <property type="resolution" value="2.60 A"/>
    <property type="chains" value="D=1-305"/>
</dbReference>
<dbReference type="PDB" id="7OF7">
    <property type="method" value="EM"/>
    <property type="resolution" value="2.50 A"/>
    <property type="chains" value="D=1-305"/>
</dbReference>
<dbReference type="PDB" id="7OG4">
    <property type="method" value="EM"/>
    <property type="resolution" value="3.80 A"/>
    <property type="chains" value="XD=1-305"/>
</dbReference>
<dbReference type="PDB" id="7OI6">
    <property type="method" value="EM"/>
    <property type="resolution" value="5.70 A"/>
    <property type="chains" value="D=1-305"/>
</dbReference>
<dbReference type="PDB" id="7OI7">
    <property type="method" value="EM"/>
    <property type="resolution" value="3.50 A"/>
    <property type="chains" value="D=1-305"/>
</dbReference>
<dbReference type="PDB" id="7OI8">
    <property type="method" value="EM"/>
    <property type="resolution" value="3.50 A"/>
    <property type="chains" value="D=1-305"/>
</dbReference>
<dbReference type="PDB" id="7OI9">
    <property type="method" value="EM"/>
    <property type="resolution" value="3.30 A"/>
    <property type="chains" value="D=1-305"/>
</dbReference>
<dbReference type="PDB" id="7OIA">
    <property type="method" value="EM"/>
    <property type="resolution" value="3.20 A"/>
    <property type="chains" value="D=1-305"/>
</dbReference>
<dbReference type="PDB" id="7OIB">
    <property type="method" value="EM"/>
    <property type="resolution" value="3.30 A"/>
    <property type="chains" value="D=1-305"/>
</dbReference>
<dbReference type="PDB" id="7OIC">
    <property type="method" value="EM"/>
    <property type="resolution" value="3.10 A"/>
    <property type="chains" value="D=1-305"/>
</dbReference>
<dbReference type="PDB" id="7OID">
    <property type="method" value="EM"/>
    <property type="resolution" value="3.70 A"/>
    <property type="chains" value="D=1-305"/>
</dbReference>
<dbReference type="PDB" id="7OIE">
    <property type="method" value="EM"/>
    <property type="resolution" value="3.50 A"/>
    <property type="chains" value="D=1-305"/>
</dbReference>
<dbReference type="PDB" id="7PD3">
    <property type="method" value="EM"/>
    <property type="resolution" value="3.40 A"/>
    <property type="chains" value="D=1-305"/>
</dbReference>
<dbReference type="PDB" id="7PO4">
    <property type="method" value="EM"/>
    <property type="resolution" value="2.56 A"/>
    <property type="chains" value="D=1-305"/>
</dbReference>
<dbReference type="PDB" id="7QH6">
    <property type="method" value="EM"/>
    <property type="resolution" value="3.08 A"/>
    <property type="chains" value="D=1-305"/>
</dbReference>
<dbReference type="PDB" id="7QH7">
    <property type="method" value="EM"/>
    <property type="resolution" value="2.89 A"/>
    <property type="chains" value="D=61-275"/>
</dbReference>
<dbReference type="PDB" id="7QI4">
    <property type="method" value="EM"/>
    <property type="resolution" value="2.21 A"/>
    <property type="chains" value="D=1-305"/>
</dbReference>
<dbReference type="PDB" id="7QI5">
    <property type="method" value="EM"/>
    <property type="resolution" value="2.63 A"/>
    <property type="chains" value="D=1-305"/>
</dbReference>
<dbReference type="PDB" id="7QI6">
    <property type="method" value="EM"/>
    <property type="resolution" value="2.98 A"/>
    <property type="chains" value="D=1-305"/>
</dbReference>
<dbReference type="PDB" id="8ANY">
    <property type="method" value="EM"/>
    <property type="resolution" value="2.85 A"/>
    <property type="chains" value="D=1-305"/>
</dbReference>
<dbReference type="PDB" id="8K2A">
    <property type="method" value="EM"/>
    <property type="resolution" value="2.90 A"/>
    <property type="chains" value="LB=1-305"/>
</dbReference>
<dbReference type="PDB" id="8K2B">
    <property type="method" value="EM"/>
    <property type="resolution" value="3.40 A"/>
    <property type="chains" value="LB=1-305"/>
</dbReference>
<dbReference type="PDB" id="8OIR">
    <property type="method" value="EM"/>
    <property type="resolution" value="3.10 A"/>
    <property type="chains" value="BL=1-305"/>
</dbReference>
<dbReference type="PDB" id="8OIT">
    <property type="method" value="EM"/>
    <property type="resolution" value="2.90 A"/>
    <property type="chains" value="BL=1-305"/>
</dbReference>
<dbReference type="PDB" id="8PK0">
    <property type="method" value="EM"/>
    <property type="resolution" value="3.03 A"/>
    <property type="chains" value="D=1-305"/>
</dbReference>
<dbReference type="PDB" id="8QSJ">
    <property type="method" value="EM"/>
    <property type="resolution" value="3.00 A"/>
    <property type="chains" value="D=1-305"/>
</dbReference>
<dbReference type="PDB" id="8QU1">
    <property type="method" value="EM"/>
    <property type="resolution" value="2.74 A"/>
    <property type="chains" value="D=1-305"/>
</dbReference>
<dbReference type="PDB" id="8QU5">
    <property type="method" value="EM"/>
    <property type="resolution" value="2.42 A"/>
    <property type="chains" value="D=1-305"/>
</dbReference>
<dbReference type="PDB" id="8RRI">
    <property type="method" value="EM"/>
    <property type="resolution" value="2.40 A"/>
    <property type="chains" value="D=1-305"/>
</dbReference>
<dbReference type="PDB" id="8XT0">
    <property type="method" value="EM"/>
    <property type="resolution" value="3.20 A"/>
    <property type="chains" value="LB=1-305"/>
</dbReference>
<dbReference type="PDB" id="8XT1">
    <property type="method" value="EM"/>
    <property type="resolution" value="3.10 A"/>
    <property type="chains" value="LB=1-305"/>
</dbReference>
<dbReference type="PDB" id="8XT2">
    <property type="method" value="EM"/>
    <property type="resolution" value="3.30 A"/>
    <property type="chains" value="LB=1-305"/>
</dbReference>
<dbReference type="PDB" id="8XT3">
    <property type="method" value="EM"/>
    <property type="resolution" value="3.10 A"/>
    <property type="chains" value="LB=1-305"/>
</dbReference>
<dbReference type="PDBsum" id="3J7Y"/>
<dbReference type="PDBsum" id="3J9M"/>
<dbReference type="PDBsum" id="5OOL"/>
<dbReference type="PDBsum" id="5OOM"/>
<dbReference type="PDBsum" id="6I9R"/>
<dbReference type="PDBsum" id="6NU2"/>
<dbReference type="PDBsum" id="6NU3"/>
<dbReference type="PDBsum" id="6VLZ"/>
<dbReference type="PDBsum" id="6VMI"/>
<dbReference type="PDBsum" id="6ZM5"/>
<dbReference type="PDBsum" id="6ZM6"/>
<dbReference type="PDBsum" id="6ZS9"/>
<dbReference type="PDBsum" id="6ZSA"/>
<dbReference type="PDBsum" id="6ZSB"/>
<dbReference type="PDBsum" id="6ZSC"/>
<dbReference type="PDBsum" id="6ZSD"/>
<dbReference type="PDBsum" id="6ZSE"/>
<dbReference type="PDBsum" id="6ZSG"/>
<dbReference type="PDBsum" id="7A5F"/>
<dbReference type="PDBsum" id="7A5G"/>
<dbReference type="PDBsum" id="7A5H"/>
<dbReference type="PDBsum" id="7A5I"/>
<dbReference type="PDBsum" id="7A5J"/>
<dbReference type="PDBsum" id="7A5K"/>
<dbReference type="PDBsum" id="7L08"/>
<dbReference type="PDBsum" id="7L20"/>
<dbReference type="PDBsum" id="7O9K"/>
<dbReference type="PDBsum" id="7O9M"/>
<dbReference type="PDBsum" id="7ODR"/>
<dbReference type="PDBsum" id="7ODS"/>
<dbReference type="PDBsum" id="7ODT"/>
<dbReference type="PDBsum" id="7OF0"/>
<dbReference type="PDBsum" id="7OF2"/>
<dbReference type="PDBsum" id="7OF3"/>
<dbReference type="PDBsum" id="7OF4"/>
<dbReference type="PDBsum" id="7OF5"/>
<dbReference type="PDBsum" id="7OF6"/>
<dbReference type="PDBsum" id="7OF7"/>
<dbReference type="PDBsum" id="7OG4"/>
<dbReference type="PDBsum" id="7OI6"/>
<dbReference type="PDBsum" id="7OI7"/>
<dbReference type="PDBsum" id="7OI8"/>
<dbReference type="PDBsum" id="7OI9"/>
<dbReference type="PDBsum" id="7OIA"/>
<dbReference type="PDBsum" id="7OIB"/>
<dbReference type="PDBsum" id="7OIC"/>
<dbReference type="PDBsum" id="7OID"/>
<dbReference type="PDBsum" id="7OIE"/>
<dbReference type="PDBsum" id="7PD3"/>
<dbReference type="PDBsum" id="7PO4"/>
<dbReference type="PDBsum" id="7QH6"/>
<dbReference type="PDBsum" id="7QH7"/>
<dbReference type="PDBsum" id="7QI4"/>
<dbReference type="PDBsum" id="7QI5"/>
<dbReference type="PDBsum" id="7QI6"/>
<dbReference type="PDBsum" id="8ANY"/>
<dbReference type="PDBsum" id="8K2A"/>
<dbReference type="PDBsum" id="8K2B"/>
<dbReference type="PDBsum" id="8OIR"/>
<dbReference type="PDBsum" id="8OIT"/>
<dbReference type="PDBsum" id="8PK0"/>
<dbReference type="PDBsum" id="8QSJ"/>
<dbReference type="PDBsum" id="8QU1"/>
<dbReference type="PDBsum" id="8QU5"/>
<dbReference type="PDBsum" id="8RRI"/>
<dbReference type="PDBsum" id="8XT0"/>
<dbReference type="PDBsum" id="8XT1"/>
<dbReference type="PDBsum" id="8XT2"/>
<dbReference type="PDBsum" id="8XT3"/>
<dbReference type="EMDB" id="EMD-0514"/>
<dbReference type="EMDB" id="EMD-0515"/>
<dbReference type="EMDB" id="EMD-11278"/>
<dbReference type="EMDB" id="EMD-11279"/>
<dbReference type="EMDB" id="EMD-11390"/>
<dbReference type="EMDB" id="EMD-11391"/>
<dbReference type="EMDB" id="EMD-11392"/>
<dbReference type="EMDB" id="EMD-11393"/>
<dbReference type="EMDB" id="EMD-11394"/>
<dbReference type="EMDB" id="EMD-11395"/>
<dbReference type="EMDB" id="EMD-11397"/>
<dbReference type="EMDB" id="EMD-11641"/>
<dbReference type="EMDB" id="EMD-11642"/>
<dbReference type="EMDB" id="EMD-11644"/>
<dbReference type="EMDB" id="EMD-12845"/>
<dbReference type="EMDB" id="EMD-12846"/>
<dbReference type="EMDB" id="EMD-12847"/>
<dbReference type="EMDB" id="EMD-12865"/>
<dbReference type="EMDB" id="EMD-12867"/>
<dbReference type="EMDB" id="EMD-12868"/>
<dbReference type="EMDB" id="EMD-12869"/>
<dbReference type="EMDB" id="EMD-12870"/>
<dbReference type="EMDB" id="EMD-12871"/>
<dbReference type="EMDB" id="EMD-12872"/>
<dbReference type="EMDB" id="EMD-12877"/>
<dbReference type="EMDB" id="EMD-12919"/>
<dbReference type="EMDB" id="EMD-12920"/>
<dbReference type="EMDB" id="EMD-12921"/>
<dbReference type="EMDB" id="EMD-12922"/>
<dbReference type="EMDB" id="EMD-12923"/>
<dbReference type="EMDB" id="EMD-12924"/>
<dbReference type="EMDB" id="EMD-12926"/>
<dbReference type="EMDB" id="EMD-12927"/>
<dbReference type="EMDB" id="EMD-13562"/>
<dbReference type="EMDB" id="EMD-13965"/>
<dbReference type="EMDB" id="EMD-13967"/>
<dbReference type="EMDB" id="EMD-13980"/>
<dbReference type="EMDB" id="EMD-13981"/>
<dbReference type="EMDB" id="EMD-13982"/>
<dbReference type="EMDB" id="EMD-15544"/>
<dbReference type="EMDB" id="EMD-16897"/>
<dbReference type="EMDB" id="EMD-16899"/>
<dbReference type="EMDB" id="EMD-17719"/>
<dbReference type="EMDB" id="EMD-19460"/>
<dbReference type="EMDB" id="EMD-21233"/>
<dbReference type="EMDB" id="EMD-21242"/>
<dbReference type="EMDB" id="EMD-23096"/>
<dbReference type="EMDB" id="EMD-23121"/>
<dbReference type="EMDB" id="EMD-36836"/>
<dbReference type="EMDB" id="EMD-36837"/>
<dbReference type="EMDB" id="EMD-38632"/>
<dbReference type="EMDB" id="EMD-38633"/>
<dbReference type="EMDB" id="EMD-38634"/>
<dbReference type="EMDB" id="EMD-38635"/>
<dbReference type="EMDB" id="EMD-4434"/>
<dbReference type="SMR" id="Q5T653"/>
<dbReference type="BioGRID" id="119260">
    <property type="interactions" value="237"/>
</dbReference>
<dbReference type="ComplexPortal" id="CPX-5226">
    <property type="entry name" value="39S mitochondrial large ribosomal subunit"/>
</dbReference>
<dbReference type="CORUM" id="Q5T653"/>
<dbReference type="FunCoup" id="Q5T653">
    <property type="interactions" value="1675"/>
</dbReference>
<dbReference type="IntAct" id="Q5T653">
    <property type="interactions" value="166"/>
</dbReference>
<dbReference type="MINT" id="Q5T653"/>
<dbReference type="STRING" id="9606.ENSP00000373404"/>
<dbReference type="GlyGen" id="Q5T653">
    <property type="glycosylation" value="2 sites, 1 N-linked glycan (1 site), 1 O-linked glycan (1 site)"/>
</dbReference>
<dbReference type="iPTMnet" id="Q5T653"/>
<dbReference type="MetOSite" id="Q5T653"/>
<dbReference type="PhosphoSitePlus" id="Q5T653"/>
<dbReference type="SwissPalm" id="Q5T653"/>
<dbReference type="BioMuta" id="MRPL2"/>
<dbReference type="DMDM" id="118573672"/>
<dbReference type="jPOST" id="Q5T653"/>
<dbReference type="MassIVE" id="Q5T653"/>
<dbReference type="PaxDb" id="9606-ENSP00000373404"/>
<dbReference type="PeptideAtlas" id="Q5T653"/>
<dbReference type="ProteomicsDB" id="64566"/>
<dbReference type="Pumba" id="Q5T653"/>
<dbReference type="TopDownProteomics" id="Q5T653"/>
<dbReference type="Antibodypedia" id="2348">
    <property type="antibodies" value="143 antibodies from 22 providers"/>
</dbReference>
<dbReference type="DNASU" id="51069"/>
<dbReference type="Ensembl" id="ENST00000388752.8">
    <property type="protein sequence ID" value="ENSP00000373404.3"/>
    <property type="gene ID" value="ENSG00000112651.12"/>
</dbReference>
<dbReference type="GeneID" id="51069"/>
<dbReference type="KEGG" id="hsa:51069"/>
<dbReference type="MANE-Select" id="ENST00000388752.8">
    <property type="protein sequence ID" value="ENSP00000373404.3"/>
    <property type="RefSeq nucleotide sequence ID" value="NM_015950.5"/>
    <property type="RefSeq protein sequence ID" value="NP_057034.2"/>
</dbReference>
<dbReference type="UCSC" id="uc003ots.2">
    <property type="organism name" value="human"/>
</dbReference>
<dbReference type="AGR" id="HGNC:14056"/>
<dbReference type="CTD" id="51069"/>
<dbReference type="GeneCards" id="MRPL2"/>
<dbReference type="HGNC" id="HGNC:14056">
    <property type="gene designation" value="MRPL2"/>
</dbReference>
<dbReference type="HPA" id="ENSG00000112651">
    <property type="expression patterns" value="Low tissue specificity"/>
</dbReference>
<dbReference type="MIM" id="611822">
    <property type="type" value="gene"/>
</dbReference>
<dbReference type="neXtProt" id="NX_Q5T653"/>
<dbReference type="OpenTargets" id="ENSG00000112651"/>
<dbReference type="PharmGKB" id="PA30949"/>
<dbReference type="VEuPathDB" id="HostDB:ENSG00000112651"/>
<dbReference type="eggNOG" id="KOG0438">
    <property type="taxonomic scope" value="Eukaryota"/>
</dbReference>
<dbReference type="GeneTree" id="ENSGT00940000153244"/>
<dbReference type="HOGENOM" id="CLU_036235_1_2_1"/>
<dbReference type="InParanoid" id="Q5T653"/>
<dbReference type="OMA" id="EHNKEHV"/>
<dbReference type="OrthoDB" id="268576at2759"/>
<dbReference type="PAN-GO" id="Q5T653">
    <property type="GO annotations" value="4 GO annotations based on evolutionary models"/>
</dbReference>
<dbReference type="PhylomeDB" id="Q5T653"/>
<dbReference type="TreeFam" id="TF314647"/>
<dbReference type="PathwayCommons" id="Q5T653"/>
<dbReference type="Reactome" id="R-HSA-5368286">
    <property type="pathway name" value="Mitochondrial translation initiation"/>
</dbReference>
<dbReference type="Reactome" id="R-HSA-5389840">
    <property type="pathway name" value="Mitochondrial translation elongation"/>
</dbReference>
<dbReference type="Reactome" id="R-HSA-5419276">
    <property type="pathway name" value="Mitochondrial translation termination"/>
</dbReference>
<dbReference type="SignaLink" id="Q5T653"/>
<dbReference type="SIGNOR" id="Q5T653"/>
<dbReference type="BioGRID-ORCS" id="51069">
    <property type="hits" value="284 hits in 1155 CRISPR screens"/>
</dbReference>
<dbReference type="ChiTaRS" id="MRPL2">
    <property type="organism name" value="human"/>
</dbReference>
<dbReference type="GenomeRNAi" id="51069"/>
<dbReference type="Pharos" id="Q5T653">
    <property type="development level" value="Tdark"/>
</dbReference>
<dbReference type="PRO" id="PR:Q5T653"/>
<dbReference type="Proteomes" id="UP000005640">
    <property type="component" value="Chromosome 6"/>
</dbReference>
<dbReference type="RNAct" id="Q5T653">
    <property type="molecule type" value="protein"/>
</dbReference>
<dbReference type="Bgee" id="ENSG00000112651">
    <property type="expression patterns" value="Expressed in hindlimb stylopod muscle and 181 other cell types or tissues"/>
</dbReference>
<dbReference type="ExpressionAtlas" id="Q5T653">
    <property type="expression patterns" value="baseline and differential"/>
</dbReference>
<dbReference type="GO" id="GO:0005743">
    <property type="term" value="C:mitochondrial inner membrane"/>
    <property type="evidence" value="ECO:0000304"/>
    <property type="project" value="Reactome"/>
</dbReference>
<dbReference type="GO" id="GO:0005762">
    <property type="term" value="C:mitochondrial large ribosomal subunit"/>
    <property type="evidence" value="ECO:0000314"/>
    <property type="project" value="UniProtKB"/>
</dbReference>
<dbReference type="GO" id="GO:0005739">
    <property type="term" value="C:mitochondrion"/>
    <property type="evidence" value="ECO:0000314"/>
    <property type="project" value="UniProtKB"/>
</dbReference>
<dbReference type="GO" id="GO:0005654">
    <property type="term" value="C:nucleoplasm"/>
    <property type="evidence" value="ECO:0000314"/>
    <property type="project" value="HPA"/>
</dbReference>
<dbReference type="GO" id="GO:0003723">
    <property type="term" value="F:RNA binding"/>
    <property type="evidence" value="ECO:0007005"/>
    <property type="project" value="UniProtKB"/>
</dbReference>
<dbReference type="GO" id="GO:0003735">
    <property type="term" value="F:structural constituent of ribosome"/>
    <property type="evidence" value="ECO:0000318"/>
    <property type="project" value="GO_Central"/>
</dbReference>
<dbReference type="GO" id="GO:0032543">
    <property type="term" value="P:mitochondrial translation"/>
    <property type="evidence" value="ECO:0000318"/>
    <property type="project" value="GO_Central"/>
</dbReference>
<dbReference type="FunFam" id="2.30.30.30:FF:000025">
    <property type="entry name" value="39S ribosomal protein L2, mitochondrial"/>
    <property type="match status" value="1"/>
</dbReference>
<dbReference type="FunFam" id="2.40.50.140:FF:000157">
    <property type="entry name" value="39S ribosomal protein L2, mitochondrial"/>
    <property type="match status" value="1"/>
</dbReference>
<dbReference type="Gene3D" id="2.30.30.30">
    <property type="match status" value="1"/>
</dbReference>
<dbReference type="Gene3D" id="2.40.50.140">
    <property type="entry name" value="Nucleic acid-binding proteins"/>
    <property type="match status" value="1"/>
</dbReference>
<dbReference type="InterPro" id="IPR012340">
    <property type="entry name" value="NA-bd_OB-fold"/>
</dbReference>
<dbReference type="InterPro" id="IPR014722">
    <property type="entry name" value="Rib_uL2_dom2"/>
</dbReference>
<dbReference type="InterPro" id="IPR002171">
    <property type="entry name" value="Ribosomal_uL2"/>
</dbReference>
<dbReference type="InterPro" id="IPR022669">
    <property type="entry name" value="Ribosomal_uL2_C"/>
</dbReference>
<dbReference type="InterPro" id="IPR022666">
    <property type="entry name" value="Ribosomal_uL2_RNA-bd_dom"/>
</dbReference>
<dbReference type="InterPro" id="IPR008991">
    <property type="entry name" value="Translation_prot_SH3-like_sf"/>
</dbReference>
<dbReference type="PANTHER" id="PTHR13691:SF73">
    <property type="entry name" value="LARGE RIBOSOMAL SUBUNIT PROTEIN UL2M"/>
    <property type="match status" value="1"/>
</dbReference>
<dbReference type="PANTHER" id="PTHR13691">
    <property type="entry name" value="RIBOSOMAL PROTEIN L2"/>
    <property type="match status" value="1"/>
</dbReference>
<dbReference type="Pfam" id="PF00181">
    <property type="entry name" value="Ribosomal_L2"/>
    <property type="match status" value="1"/>
</dbReference>
<dbReference type="Pfam" id="PF03947">
    <property type="entry name" value="Ribosomal_L2_C"/>
    <property type="match status" value="1"/>
</dbReference>
<dbReference type="SMART" id="SM01383">
    <property type="entry name" value="Ribosomal_L2"/>
    <property type="match status" value="1"/>
</dbReference>
<dbReference type="SMART" id="SM01382">
    <property type="entry name" value="Ribosomal_L2_C"/>
    <property type="match status" value="1"/>
</dbReference>
<dbReference type="SUPFAM" id="SSF50249">
    <property type="entry name" value="Nucleic acid-binding proteins"/>
    <property type="match status" value="1"/>
</dbReference>
<dbReference type="SUPFAM" id="SSF50104">
    <property type="entry name" value="Translation proteins SH3-like domain"/>
    <property type="match status" value="1"/>
</dbReference>
<reference key="1">
    <citation type="journal article" date="2000" name="Genome Res.">
        <title>Identification of novel human genes evolutionarily conserved in Caenorhabditis elegans by comparative proteomics.</title>
        <authorList>
            <person name="Lai C.-H."/>
            <person name="Chou C.-Y."/>
            <person name="Ch'ang L.-Y."/>
            <person name="Liu C.-S."/>
            <person name="Lin W.-C."/>
        </authorList>
    </citation>
    <scope>NUCLEOTIDE SEQUENCE [LARGE SCALE MRNA]</scope>
</reference>
<reference key="2">
    <citation type="journal article" date="2004" name="Nat. Genet.">
        <title>Complete sequencing and characterization of 21,243 full-length human cDNAs.</title>
        <authorList>
            <person name="Ota T."/>
            <person name="Suzuki Y."/>
            <person name="Nishikawa T."/>
            <person name="Otsuki T."/>
            <person name="Sugiyama T."/>
            <person name="Irie R."/>
            <person name="Wakamatsu A."/>
            <person name="Hayashi K."/>
            <person name="Sato H."/>
            <person name="Nagai K."/>
            <person name="Kimura K."/>
            <person name="Makita H."/>
            <person name="Sekine M."/>
            <person name="Obayashi M."/>
            <person name="Nishi T."/>
            <person name="Shibahara T."/>
            <person name="Tanaka T."/>
            <person name="Ishii S."/>
            <person name="Yamamoto J."/>
            <person name="Saito K."/>
            <person name="Kawai Y."/>
            <person name="Isono Y."/>
            <person name="Nakamura Y."/>
            <person name="Nagahari K."/>
            <person name="Murakami K."/>
            <person name="Yasuda T."/>
            <person name="Iwayanagi T."/>
            <person name="Wagatsuma M."/>
            <person name="Shiratori A."/>
            <person name="Sudo H."/>
            <person name="Hosoiri T."/>
            <person name="Kaku Y."/>
            <person name="Kodaira H."/>
            <person name="Kondo H."/>
            <person name="Sugawara M."/>
            <person name="Takahashi M."/>
            <person name="Kanda K."/>
            <person name="Yokoi T."/>
            <person name="Furuya T."/>
            <person name="Kikkawa E."/>
            <person name="Omura Y."/>
            <person name="Abe K."/>
            <person name="Kamihara K."/>
            <person name="Katsuta N."/>
            <person name="Sato K."/>
            <person name="Tanikawa M."/>
            <person name="Yamazaki M."/>
            <person name="Ninomiya K."/>
            <person name="Ishibashi T."/>
            <person name="Yamashita H."/>
            <person name="Murakawa K."/>
            <person name="Fujimori K."/>
            <person name="Tanai H."/>
            <person name="Kimata M."/>
            <person name="Watanabe M."/>
            <person name="Hiraoka S."/>
            <person name="Chiba Y."/>
            <person name="Ishida S."/>
            <person name="Ono Y."/>
            <person name="Takiguchi S."/>
            <person name="Watanabe S."/>
            <person name="Yosida M."/>
            <person name="Hotuta T."/>
            <person name="Kusano J."/>
            <person name="Kanehori K."/>
            <person name="Takahashi-Fujii A."/>
            <person name="Hara H."/>
            <person name="Tanase T.-O."/>
            <person name="Nomura Y."/>
            <person name="Togiya S."/>
            <person name="Komai F."/>
            <person name="Hara R."/>
            <person name="Takeuchi K."/>
            <person name="Arita M."/>
            <person name="Imose N."/>
            <person name="Musashino K."/>
            <person name="Yuuki H."/>
            <person name="Oshima A."/>
            <person name="Sasaki N."/>
            <person name="Aotsuka S."/>
            <person name="Yoshikawa Y."/>
            <person name="Matsunawa H."/>
            <person name="Ichihara T."/>
            <person name="Shiohata N."/>
            <person name="Sano S."/>
            <person name="Moriya S."/>
            <person name="Momiyama H."/>
            <person name="Satoh N."/>
            <person name="Takami S."/>
            <person name="Terashima Y."/>
            <person name="Suzuki O."/>
            <person name="Nakagawa S."/>
            <person name="Senoh A."/>
            <person name="Mizoguchi H."/>
            <person name="Goto Y."/>
            <person name="Shimizu F."/>
            <person name="Wakebe H."/>
            <person name="Hishigaki H."/>
            <person name="Watanabe T."/>
            <person name="Sugiyama A."/>
            <person name="Takemoto M."/>
            <person name="Kawakami B."/>
            <person name="Yamazaki M."/>
            <person name="Watanabe K."/>
            <person name="Kumagai A."/>
            <person name="Itakura S."/>
            <person name="Fukuzumi Y."/>
            <person name="Fujimori Y."/>
            <person name="Komiyama M."/>
            <person name="Tashiro H."/>
            <person name="Tanigami A."/>
            <person name="Fujiwara T."/>
            <person name="Ono T."/>
            <person name="Yamada K."/>
            <person name="Fujii Y."/>
            <person name="Ozaki K."/>
            <person name="Hirao M."/>
            <person name="Ohmori Y."/>
            <person name="Kawabata A."/>
            <person name="Hikiji T."/>
            <person name="Kobatake N."/>
            <person name="Inagaki H."/>
            <person name="Ikema Y."/>
            <person name="Okamoto S."/>
            <person name="Okitani R."/>
            <person name="Kawakami T."/>
            <person name="Noguchi S."/>
            <person name="Itoh T."/>
            <person name="Shigeta K."/>
            <person name="Senba T."/>
            <person name="Matsumura K."/>
            <person name="Nakajima Y."/>
            <person name="Mizuno T."/>
            <person name="Morinaga M."/>
            <person name="Sasaki M."/>
            <person name="Togashi T."/>
            <person name="Oyama M."/>
            <person name="Hata H."/>
            <person name="Watanabe M."/>
            <person name="Komatsu T."/>
            <person name="Mizushima-Sugano J."/>
            <person name="Satoh T."/>
            <person name="Shirai Y."/>
            <person name="Takahashi Y."/>
            <person name="Nakagawa K."/>
            <person name="Okumura K."/>
            <person name="Nagase T."/>
            <person name="Nomura N."/>
            <person name="Kikuchi H."/>
            <person name="Masuho Y."/>
            <person name="Yamashita R."/>
            <person name="Nakai K."/>
            <person name="Yada T."/>
            <person name="Nakamura Y."/>
            <person name="Ohara O."/>
            <person name="Isogai T."/>
            <person name="Sugano S."/>
        </authorList>
    </citation>
    <scope>NUCLEOTIDE SEQUENCE [LARGE SCALE MRNA]</scope>
</reference>
<reference key="3">
    <citation type="journal article" date="2003" name="Nature">
        <title>The DNA sequence and analysis of human chromosome 6.</title>
        <authorList>
            <person name="Mungall A.J."/>
            <person name="Palmer S.A."/>
            <person name="Sims S.K."/>
            <person name="Edwards C.A."/>
            <person name="Ashurst J.L."/>
            <person name="Wilming L."/>
            <person name="Jones M.C."/>
            <person name="Horton R."/>
            <person name="Hunt S.E."/>
            <person name="Scott C.E."/>
            <person name="Gilbert J.G.R."/>
            <person name="Clamp M.E."/>
            <person name="Bethel G."/>
            <person name="Milne S."/>
            <person name="Ainscough R."/>
            <person name="Almeida J.P."/>
            <person name="Ambrose K.D."/>
            <person name="Andrews T.D."/>
            <person name="Ashwell R.I.S."/>
            <person name="Babbage A.K."/>
            <person name="Bagguley C.L."/>
            <person name="Bailey J."/>
            <person name="Banerjee R."/>
            <person name="Barker D.J."/>
            <person name="Barlow K.F."/>
            <person name="Bates K."/>
            <person name="Beare D.M."/>
            <person name="Beasley H."/>
            <person name="Beasley O."/>
            <person name="Bird C.P."/>
            <person name="Blakey S.E."/>
            <person name="Bray-Allen S."/>
            <person name="Brook J."/>
            <person name="Brown A.J."/>
            <person name="Brown J.Y."/>
            <person name="Burford D.C."/>
            <person name="Burrill W."/>
            <person name="Burton J."/>
            <person name="Carder C."/>
            <person name="Carter N.P."/>
            <person name="Chapman J.C."/>
            <person name="Clark S.Y."/>
            <person name="Clark G."/>
            <person name="Clee C.M."/>
            <person name="Clegg S."/>
            <person name="Cobley V."/>
            <person name="Collier R.E."/>
            <person name="Collins J.E."/>
            <person name="Colman L.K."/>
            <person name="Corby N.R."/>
            <person name="Coville G.J."/>
            <person name="Culley K.M."/>
            <person name="Dhami P."/>
            <person name="Davies J."/>
            <person name="Dunn M."/>
            <person name="Earthrowl M.E."/>
            <person name="Ellington A.E."/>
            <person name="Evans K.A."/>
            <person name="Faulkner L."/>
            <person name="Francis M.D."/>
            <person name="Frankish A."/>
            <person name="Frankland J."/>
            <person name="French L."/>
            <person name="Garner P."/>
            <person name="Garnett J."/>
            <person name="Ghori M.J."/>
            <person name="Gilby L.M."/>
            <person name="Gillson C.J."/>
            <person name="Glithero R.J."/>
            <person name="Grafham D.V."/>
            <person name="Grant M."/>
            <person name="Gribble S."/>
            <person name="Griffiths C."/>
            <person name="Griffiths M.N.D."/>
            <person name="Hall R."/>
            <person name="Halls K.S."/>
            <person name="Hammond S."/>
            <person name="Harley J.L."/>
            <person name="Hart E.A."/>
            <person name="Heath P.D."/>
            <person name="Heathcott R."/>
            <person name="Holmes S.J."/>
            <person name="Howden P.J."/>
            <person name="Howe K.L."/>
            <person name="Howell G.R."/>
            <person name="Huckle E."/>
            <person name="Humphray S.J."/>
            <person name="Humphries M.D."/>
            <person name="Hunt A.R."/>
            <person name="Johnson C.M."/>
            <person name="Joy A.A."/>
            <person name="Kay M."/>
            <person name="Keenan S.J."/>
            <person name="Kimberley A.M."/>
            <person name="King A."/>
            <person name="Laird G.K."/>
            <person name="Langford C."/>
            <person name="Lawlor S."/>
            <person name="Leongamornlert D.A."/>
            <person name="Leversha M."/>
            <person name="Lloyd C.R."/>
            <person name="Lloyd D.M."/>
            <person name="Loveland J.E."/>
            <person name="Lovell J."/>
            <person name="Martin S."/>
            <person name="Mashreghi-Mohammadi M."/>
            <person name="Maslen G.L."/>
            <person name="Matthews L."/>
            <person name="McCann O.T."/>
            <person name="McLaren S.J."/>
            <person name="McLay K."/>
            <person name="McMurray A."/>
            <person name="Moore M.J.F."/>
            <person name="Mullikin J.C."/>
            <person name="Niblett D."/>
            <person name="Nickerson T."/>
            <person name="Novik K.L."/>
            <person name="Oliver K."/>
            <person name="Overton-Larty E.K."/>
            <person name="Parker A."/>
            <person name="Patel R."/>
            <person name="Pearce A.V."/>
            <person name="Peck A.I."/>
            <person name="Phillimore B.J.C.T."/>
            <person name="Phillips S."/>
            <person name="Plumb R.W."/>
            <person name="Porter K.M."/>
            <person name="Ramsey Y."/>
            <person name="Ranby S.A."/>
            <person name="Rice C.M."/>
            <person name="Ross M.T."/>
            <person name="Searle S.M."/>
            <person name="Sehra H.K."/>
            <person name="Sheridan E."/>
            <person name="Skuce C.D."/>
            <person name="Smith S."/>
            <person name="Smith M."/>
            <person name="Spraggon L."/>
            <person name="Squares S.L."/>
            <person name="Steward C.A."/>
            <person name="Sycamore N."/>
            <person name="Tamlyn-Hall G."/>
            <person name="Tester J."/>
            <person name="Theaker A.J."/>
            <person name="Thomas D.W."/>
            <person name="Thorpe A."/>
            <person name="Tracey A."/>
            <person name="Tromans A."/>
            <person name="Tubby B."/>
            <person name="Wall M."/>
            <person name="Wallis J.M."/>
            <person name="West A.P."/>
            <person name="White S.S."/>
            <person name="Whitehead S.L."/>
            <person name="Whittaker H."/>
            <person name="Wild A."/>
            <person name="Willey D.J."/>
            <person name="Wilmer T.E."/>
            <person name="Wood J.M."/>
            <person name="Wray P.W."/>
            <person name="Wyatt J.C."/>
            <person name="Young L."/>
            <person name="Younger R.M."/>
            <person name="Bentley D.R."/>
            <person name="Coulson A."/>
            <person name="Durbin R.M."/>
            <person name="Hubbard T."/>
            <person name="Sulston J.E."/>
            <person name="Dunham I."/>
            <person name="Rogers J."/>
            <person name="Beck S."/>
        </authorList>
    </citation>
    <scope>NUCLEOTIDE SEQUENCE [LARGE SCALE GENOMIC DNA]</scope>
</reference>
<reference key="4">
    <citation type="journal article" date="2004" name="Genome Res.">
        <title>The status, quality, and expansion of the NIH full-length cDNA project: the Mammalian Gene Collection (MGC).</title>
        <authorList>
            <consortium name="The MGC Project Team"/>
        </authorList>
    </citation>
    <scope>NUCLEOTIDE SEQUENCE [LARGE SCALE MRNA]</scope>
    <source>
        <tissue>Ovary</tissue>
        <tissue>Skin</tissue>
    </source>
</reference>
<reference key="5">
    <citation type="journal article" date="2001" name="Genomics">
        <title>The human mitochondrial ribosomal protein genes: mapping of 54 genes to the chromosomes and implications for human disorders.</title>
        <authorList>
            <person name="Kenmochi N."/>
            <person name="Suzuki T."/>
            <person name="Uechi T."/>
            <person name="Magoori M."/>
            <person name="Kuniba M."/>
            <person name="Higa S."/>
            <person name="Watanabe K."/>
            <person name="Tanaka T."/>
        </authorList>
    </citation>
    <scope>NUCLEOTIDE SEQUENCE [GENOMIC DNA] OF 250-305</scope>
</reference>
<reference key="6">
    <citation type="journal article" date="2011" name="BMC Syst. Biol.">
        <title>Initial characterization of the human central proteome.</title>
        <authorList>
            <person name="Burkard T.R."/>
            <person name="Planyavsky M."/>
            <person name="Kaupe I."/>
            <person name="Breitwieser F.P."/>
            <person name="Buerckstuemmer T."/>
            <person name="Bennett K.L."/>
            <person name="Superti-Furga G."/>
            <person name="Colinge J."/>
        </authorList>
    </citation>
    <scope>IDENTIFICATION BY MASS SPECTROMETRY [LARGE SCALE ANALYSIS]</scope>
</reference>
<reference key="7">
    <citation type="journal article" date="2015" name="Proteomics">
        <title>N-terminome analysis of the human mitochondrial proteome.</title>
        <authorList>
            <person name="Vaca Jacome A.S."/>
            <person name="Rabilloud T."/>
            <person name="Schaeffer-Reiss C."/>
            <person name="Rompais M."/>
            <person name="Ayoub D."/>
            <person name="Lane L."/>
            <person name="Bairoch A."/>
            <person name="Van Dorsselaer A."/>
            <person name="Carapito C."/>
        </authorList>
    </citation>
    <scope>IDENTIFICATION BY MASS SPECTROMETRY [LARGE SCALE ANALYSIS]</scope>
</reference>
<reference evidence="9" key="8">
    <citation type="journal article" date="2014" name="Science">
        <title>Structure of the large ribosomal subunit from human mitochondria.</title>
        <authorList>
            <person name="Brown A."/>
            <person name="Amunts A."/>
            <person name="Bai X.C."/>
            <person name="Sugimoto Y."/>
            <person name="Edwards P.C."/>
            <person name="Murshudov G."/>
            <person name="Scheres S.H."/>
            <person name="Ramakrishnan V."/>
        </authorList>
    </citation>
    <scope>STRUCTURE BY ELECTRON MICROSCOPY (3.40 ANGSTROMS)</scope>
    <scope>SUBCELLULAR LOCATION</scope>
    <scope>SUBUNIT</scope>
</reference>
<reference evidence="10" key="9">
    <citation type="journal article" date="2015" name="Science">
        <title>Ribosome. The structure of the human mitochondrial ribosome.</title>
        <authorList>
            <person name="Amunts A."/>
            <person name="Brown A."/>
            <person name="Toots J."/>
            <person name="Scheres S.H."/>
            <person name="Ramakrishnan V."/>
        </authorList>
    </citation>
    <scope>STRUCTURE BY ELECTRON MICROSCOPY (3.50 ANGSTROMS)</scope>
    <scope>SUBCELLULAR LOCATION</scope>
    <scope>SUBUNIT</scope>
</reference>
<reference evidence="11 12" key="10">
    <citation type="journal article" date="2017" name="Nat. Struct. Mol. Biol.">
        <title>Structures of the human mitochondrial ribosome in native states of assembly.</title>
        <authorList>
            <person name="Brown A."/>
            <person name="Rathore S."/>
            <person name="Kimanius D."/>
            <person name="Aibara S."/>
            <person name="Bai X.C."/>
            <person name="Rorbach J."/>
            <person name="Amunts A."/>
            <person name="Ramakrishnan V."/>
        </authorList>
    </citation>
    <scope>STRUCTURE BY ELECTRON MICROSCOPY (3.03 ANGSTROMS)</scope>
    <scope>SUBCELLULAR LOCATION</scope>
    <scope>SUBUNIT</scope>
</reference>
<reference evidence="13 14" key="11">
    <citation type="journal article" date="2022" name="Nat. Commun.">
        <title>A late-stage assembly checkpoint of the human mitochondrial ribosome large subunit.</title>
        <authorList>
            <person name="Rebelo-Guiomar P."/>
            <person name="Pellegrino S."/>
            <person name="Dent K.C."/>
            <person name="Sas-Chen A."/>
            <person name="Miller-Fleming L."/>
            <person name="Garone C."/>
            <person name="Van Haute L."/>
            <person name="Rogan J.F."/>
            <person name="Dinan A."/>
            <person name="Firth A.E."/>
            <person name="Andrews B."/>
            <person name="Whitworth A.J."/>
            <person name="Schwartz S."/>
            <person name="Warren A.J."/>
            <person name="Minczuk M."/>
        </authorList>
    </citation>
    <scope>STRUCTURE BY ELECTRON MICROSCOPY (2.9 ANGSTROMS) IN COMPLEX WITH MTLSU</scope>
    <scope>SUBUNIT</scope>
</reference>
<feature type="transit peptide" description="Mitochondrion" evidence="1">
    <location>
        <begin position="1"/>
        <end position="60"/>
    </location>
</feature>
<feature type="chain" id="PRO_0000261640" description="Large ribosomal subunit protein uL2m">
    <location>
        <begin position="61"/>
        <end position="305"/>
    </location>
</feature>
<feature type="region of interest" description="Disordered" evidence="2">
    <location>
        <begin position="264"/>
        <end position="283"/>
    </location>
</feature>
<feature type="compositionally biased region" description="Basic residues" evidence="2">
    <location>
        <begin position="274"/>
        <end position="283"/>
    </location>
</feature>
<feature type="sequence variant" id="VAR_029470" description="In dbSNP:rs10456521.">
    <original>S</original>
    <variation>F</variation>
    <location>
        <position position="300"/>
    </location>
</feature>
<feature type="sequence conflict" description="In Ref. 1; AAD27731." evidence="8" ref="1">
    <original>RS</original>
    <variation>LV</variation>
    <location>
        <begin position="11"/>
        <end position="12"/>
    </location>
</feature>
<feature type="sequence conflict" description="In Ref. 1; AAD27731." evidence="8" ref="1">
    <original>TA</original>
    <variation>HS</variation>
    <location>
        <begin position="223"/>
        <end position="224"/>
    </location>
</feature>
<feature type="strand" evidence="15">
    <location>
        <begin position="74"/>
        <end position="78"/>
    </location>
</feature>
<feature type="strand" evidence="16">
    <location>
        <begin position="89"/>
        <end position="96"/>
    </location>
</feature>
<feature type="strand" evidence="15">
    <location>
        <begin position="103"/>
        <end position="105"/>
    </location>
</feature>
<feature type="strand" evidence="16">
    <location>
        <begin position="122"/>
        <end position="130"/>
    </location>
</feature>
<feature type="strand" evidence="19">
    <location>
        <begin position="135"/>
        <end position="137"/>
    </location>
</feature>
<feature type="strand" evidence="16">
    <location>
        <begin position="139"/>
        <end position="145"/>
    </location>
</feature>
<feature type="strand" evidence="16">
    <location>
        <begin position="147"/>
        <end position="152"/>
    </location>
</feature>
<feature type="strand" evidence="19">
    <location>
        <begin position="154"/>
        <end position="156"/>
    </location>
</feature>
<feature type="strand" evidence="16">
    <location>
        <begin position="162"/>
        <end position="165"/>
    </location>
</feature>
<feature type="strand" evidence="16">
    <location>
        <begin position="181"/>
        <end position="183"/>
    </location>
</feature>
<feature type="helix" evidence="16">
    <location>
        <begin position="184"/>
        <end position="186"/>
    </location>
</feature>
<feature type="strand" evidence="16">
    <location>
        <begin position="192"/>
        <end position="196"/>
    </location>
</feature>
<feature type="strand" evidence="17">
    <location>
        <begin position="197"/>
        <end position="199"/>
    </location>
</feature>
<feature type="turn" evidence="16">
    <location>
        <begin position="200"/>
        <end position="202"/>
    </location>
</feature>
<feature type="strand" evidence="15">
    <location>
        <begin position="204"/>
        <end position="207"/>
    </location>
</feature>
<feature type="strand" evidence="16">
    <location>
        <begin position="214"/>
        <end position="220"/>
    </location>
</feature>
<feature type="strand" evidence="16">
    <location>
        <begin position="223"/>
        <end position="227"/>
    </location>
</feature>
<feature type="turn" evidence="18">
    <location>
        <begin position="229"/>
        <end position="231"/>
    </location>
</feature>
<feature type="strand" evidence="16">
    <location>
        <begin position="233"/>
        <end position="237"/>
    </location>
</feature>
<feature type="strand" evidence="16">
    <location>
        <begin position="240"/>
        <end position="245"/>
    </location>
</feature>
<feature type="strand" evidence="18">
    <location>
        <begin position="247"/>
        <end position="249"/>
    </location>
</feature>
<feature type="helix" evidence="16">
    <location>
        <begin position="250"/>
        <end position="254"/>
    </location>
</feature>
<feature type="helix" evidence="16">
    <location>
        <begin position="260"/>
        <end position="266"/>
    </location>
</feature>
<feature type="helix" evidence="15">
    <location>
        <begin position="280"/>
        <end position="282"/>
    </location>
</feature>
<feature type="helix" evidence="16">
    <location>
        <begin position="291"/>
        <end position="295"/>
    </location>
</feature>